<dbReference type="EMBL" id="AY446894">
    <property type="protein sequence ID" value="AAR31578.1"/>
    <property type="molecule type" value="Genomic_DNA"/>
</dbReference>
<dbReference type="RefSeq" id="YP_081472.1">
    <property type="nucleotide sequence ID" value="NC_006273.2"/>
</dbReference>
<dbReference type="DNASU" id="3077428"/>
<dbReference type="GeneID" id="3077428"/>
<dbReference type="KEGG" id="vg:3077428"/>
<dbReference type="Reactome" id="R-HSA-9609690">
    <property type="pathway name" value="HCMV Early Events"/>
</dbReference>
<dbReference type="Proteomes" id="UP000000938">
    <property type="component" value="Segment"/>
</dbReference>
<dbReference type="GO" id="GO:0033650">
    <property type="term" value="C:host cell mitochondrion"/>
    <property type="evidence" value="ECO:0007669"/>
    <property type="project" value="UniProtKB-SubCell"/>
</dbReference>
<organism>
    <name type="scientific">Human cytomegalovirus (strain Merlin)</name>
    <name type="common">HHV-5</name>
    <name type="synonym">Human herpesvirus 5</name>
    <dbReference type="NCBI Taxonomy" id="295027"/>
    <lineage>
        <taxon>Viruses</taxon>
        <taxon>Duplodnaviria</taxon>
        <taxon>Heunggongvirae</taxon>
        <taxon>Peploviricota</taxon>
        <taxon>Herviviricetes</taxon>
        <taxon>Herpesvirales</taxon>
        <taxon>Orthoherpesviridae</taxon>
        <taxon>Betaherpesvirinae</taxon>
        <taxon>Cytomegalovirus</taxon>
        <taxon>Cytomegalovirus humanbeta5</taxon>
        <taxon>Human cytomegalovirus</taxon>
    </lineage>
</organism>
<evidence type="ECO:0000250" key="1">
    <source>
        <dbReference type="UniProtKB" id="P16755"/>
    </source>
</evidence>
<evidence type="ECO:0000255" key="2"/>
<evidence type="ECO:0000256" key="3">
    <source>
        <dbReference type="SAM" id="MobiDB-lite"/>
    </source>
</evidence>
<evidence type="ECO:0000305" key="4"/>
<protein>
    <recommendedName>
        <fullName>Uncharacterized protein UL13</fullName>
    </recommendedName>
</protein>
<keyword id="KW-1045">Host mitochondrion</keyword>
<keyword id="KW-0945">Host-virus interaction</keyword>
<keyword id="KW-1185">Reference proteome</keyword>
<keyword id="KW-0732">Signal</keyword>
<sequence>MLWAHCGRFLRYHLLPLLLCRLPFLLFFQRPQWAHGLDIVEEDEWLREIQGATYQLSIVRQAMQHAGFQVRAASVMTRRNAVDLDRPPLWSGSLPHLPVYDVRSPRPLRPPSSQHHAVSPELPSRNGIRWQYQELQYLVEEQRRRNQSRNAIPRPSFPPPDPPSQPAEDARDADAERAESPHTAESTVSHDASDNAVRRRHERRRYNALTVRSRDSLLLTRIRFSNQRCFGRGRLRHPAGSGPNTGGPRPGGAGLRQLRQQLTVRWQLFRLRCHGWTQQVSSQIRTRWEESNVVSQTATRVRTWFVQRTTLWRRTWVPGQNPAAEAQELAIIPPAPTVLRQNEEPRQQLTGEETRNSTHTQREEVEDVSREGAREGNDGSRASGNDERRNNAGRYDDDHEVQEPQVTYPAGQGELNRRSQEENEEGGPCESPPMTTNTLTVACPPREPPHRALFRLCLGLWVSSYLVRRPMTI</sequence>
<comment type="function">
    <text evidence="1">Plays an essential role during infection by modulating mitochondrial ultrastructure and thereby increasing bioenergetic potential. Mechanistically, alters cristae architecture by interacting with components of the host mitochondrial contact site and cristae organizing system (MICOS) complex.</text>
</comment>
<comment type="subunit">
    <text evidence="1">Interacts with host MICOS complex subunits IMMT and CHCHD3.</text>
</comment>
<comment type="subcellular location">
    <subcellularLocation>
        <location evidence="1">Host mitochondrion</location>
    </subcellularLocation>
</comment>
<comment type="similarity">
    <text evidence="4">Belongs to the HHV-5 UL13 protein family.</text>
</comment>
<feature type="signal peptide" evidence="2">
    <location>
        <begin position="1"/>
        <end position="35"/>
    </location>
</feature>
<feature type="chain" id="PRO_0000417837" description="Uncharacterized protein UL13">
    <location>
        <begin position="36"/>
        <end position="473"/>
    </location>
</feature>
<feature type="region of interest" description="Disordered" evidence="3">
    <location>
        <begin position="142"/>
        <end position="201"/>
    </location>
</feature>
<feature type="region of interest" description="Disordered" evidence="3">
    <location>
        <begin position="232"/>
        <end position="254"/>
    </location>
</feature>
<feature type="region of interest" description="Disordered" evidence="3">
    <location>
        <begin position="331"/>
        <end position="437"/>
    </location>
</feature>
<feature type="compositionally biased region" description="Pro residues" evidence="3">
    <location>
        <begin position="155"/>
        <end position="165"/>
    </location>
</feature>
<feature type="compositionally biased region" description="Basic and acidic residues" evidence="3">
    <location>
        <begin position="168"/>
        <end position="182"/>
    </location>
</feature>
<feature type="compositionally biased region" description="Gly residues" evidence="3">
    <location>
        <begin position="243"/>
        <end position="254"/>
    </location>
</feature>
<feature type="compositionally biased region" description="Basic and acidic residues" evidence="3">
    <location>
        <begin position="341"/>
        <end position="397"/>
    </location>
</feature>
<accession>Q6SWB8</accession>
<accession>D2K3I2</accession>
<reference key="1">
    <citation type="journal article" date="2004" name="J. Gen. Virol.">
        <title>Genetic content of wild-type human cytomegalovirus.</title>
        <authorList>
            <person name="Dolan A."/>
            <person name="Cunningham C."/>
            <person name="Hector R.D."/>
            <person name="Hassan-Walker A.F."/>
            <person name="Lee L."/>
            <person name="Addison C."/>
            <person name="Dargan D.J."/>
            <person name="McGeoch D.J."/>
            <person name="Gatherer D."/>
            <person name="Emery V.C."/>
            <person name="Griffiths P.D."/>
            <person name="Sinzger C."/>
            <person name="McSharry B.P."/>
            <person name="Wilkinson G.W.G."/>
            <person name="Davison A.J."/>
        </authorList>
    </citation>
    <scope>NUCLEOTIDE SEQUENCE [LARGE SCALE GENOMIC DNA]</scope>
</reference>
<gene>
    <name type="primary">UL13</name>
</gene>
<organismHost>
    <name type="scientific">Homo sapiens</name>
    <name type="common">Human</name>
    <dbReference type="NCBI Taxonomy" id="9606"/>
</organismHost>
<name>UL13_HCMVM</name>
<proteinExistence type="inferred from homology"/>